<reference key="1">
    <citation type="journal article" date="2010" name="Science">
        <title>The genome of the Western clawed frog Xenopus tropicalis.</title>
        <authorList>
            <person name="Hellsten U."/>
            <person name="Harland R.M."/>
            <person name="Gilchrist M.J."/>
            <person name="Hendrix D."/>
            <person name="Jurka J."/>
            <person name="Kapitonov V."/>
            <person name="Ovcharenko I."/>
            <person name="Putnam N.H."/>
            <person name="Shu S."/>
            <person name="Taher L."/>
            <person name="Blitz I.L."/>
            <person name="Blumberg B."/>
            <person name="Dichmann D.S."/>
            <person name="Dubchak I."/>
            <person name="Amaya E."/>
            <person name="Detter J.C."/>
            <person name="Fletcher R."/>
            <person name="Gerhard D.S."/>
            <person name="Goodstein D."/>
            <person name="Graves T."/>
            <person name="Grigoriev I.V."/>
            <person name="Grimwood J."/>
            <person name="Kawashima T."/>
            <person name="Lindquist E."/>
            <person name="Lucas S.M."/>
            <person name="Mead P.E."/>
            <person name="Mitros T."/>
            <person name="Ogino H."/>
            <person name="Ohta Y."/>
            <person name="Poliakov A.V."/>
            <person name="Pollet N."/>
            <person name="Robert J."/>
            <person name="Salamov A."/>
            <person name="Sater A.K."/>
            <person name="Schmutz J."/>
            <person name="Terry A."/>
            <person name="Vize P.D."/>
            <person name="Warren W.C."/>
            <person name="Wells D."/>
            <person name="Wills A."/>
            <person name="Wilson R.K."/>
            <person name="Zimmerman L.B."/>
            <person name="Zorn A.M."/>
            <person name="Grainger R."/>
            <person name="Grammer T."/>
            <person name="Khokha M.K."/>
            <person name="Richardson P.M."/>
            <person name="Rokhsar D.S."/>
        </authorList>
    </citation>
    <scope>NUCLEOTIDE SEQUENCE [LARGE SCALE GENOMIC DNA]</scope>
</reference>
<keyword id="KW-0963">Cytoplasm</keyword>
<keyword id="KW-0479">Metal-binding</keyword>
<keyword id="KW-0496">Mitochondrion</keyword>
<keyword id="KW-0520">NAD</keyword>
<keyword id="KW-0539">Nucleus</keyword>
<keyword id="KW-1185">Reference proteome</keyword>
<keyword id="KW-0808">Transferase</keyword>
<keyword id="KW-0809">Transit peptide</keyword>
<keyword id="KW-0862">Zinc</keyword>
<feature type="transit peptide" description="Mitochondrion" evidence="1">
    <location>
        <begin position="1"/>
        <end position="35"/>
    </location>
</feature>
<feature type="chain" id="PRO_0000415576" description="NAD-dependent protein deacylase sirtuin-5, mitochondrial">
    <location>
        <begin position="36"/>
        <end position="309"/>
    </location>
</feature>
<feature type="domain" description="Deacetylase sirtuin-type" evidence="2">
    <location>
        <begin position="36"/>
        <end position="306"/>
    </location>
</feature>
<feature type="active site" description="Proton acceptor" evidence="2">
    <location>
        <position position="157"/>
    </location>
</feature>
<feature type="binding site" evidence="1">
    <location>
        <begin position="57"/>
        <end position="76"/>
    </location>
    <ligand>
        <name>NAD(+)</name>
        <dbReference type="ChEBI" id="CHEBI:57540"/>
    </ligand>
</feature>
<feature type="binding site" evidence="1">
    <location>
        <position position="101"/>
    </location>
    <ligand>
        <name>substrate</name>
    </ligand>
</feature>
<feature type="binding site" evidence="1">
    <location>
        <position position="104"/>
    </location>
    <ligand>
        <name>substrate</name>
    </ligand>
</feature>
<feature type="binding site" evidence="1">
    <location>
        <begin position="139"/>
        <end position="142"/>
    </location>
    <ligand>
        <name>NAD(+)</name>
        <dbReference type="ChEBI" id="CHEBI:57540"/>
    </ligand>
</feature>
<feature type="binding site" evidence="1">
    <location>
        <position position="165"/>
    </location>
    <ligand>
        <name>Zn(2+)</name>
        <dbReference type="ChEBI" id="CHEBI:29105"/>
    </ligand>
</feature>
<feature type="binding site" evidence="1">
    <location>
        <position position="168"/>
    </location>
    <ligand>
        <name>Zn(2+)</name>
        <dbReference type="ChEBI" id="CHEBI:29105"/>
    </ligand>
</feature>
<feature type="binding site" evidence="1">
    <location>
        <position position="206"/>
    </location>
    <ligand>
        <name>Zn(2+)</name>
        <dbReference type="ChEBI" id="CHEBI:29105"/>
    </ligand>
</feature>
<feature type="binding site" evidence="1">
    <location>
        <position position="211"/>
    </location>
    <ligand>
        <name>Zn(2+)</name>
        <dbReference type="ChEBI" id="CHEBI:29105"/>
    </ligand>
</feature>
<feature type="binding site" evidence="1">
    <location>
        <begin position="248"/>
        <end position="250"/>
    </location>
    <ligand>
        <name>NAD(+)</name>
        <dbReference type="ChEBI" id="CHEBI:57540"/>
    </ligand>
</feature>
<feature type="binding site" evidence="1">
    <location>
        <begin position="274"/>
        <end position="276"/>
    </location>
    <ligand>
        <name>NAD(+)</name>
        <dbReference type="ChEBI" id="CHEBI:57540"/>
    </ligand>
</feature>
<feature type="binding site" evidence="1">
    <location>
        <position position="292"/>
    </location>
    <ligand>
        <name>NAD(+)</name>
        <dbReference type="ChEBI" id="CHEBI:57540"/>
    </ligand>
</feature>
<protein>
    <recommendedName>
        <fullName evidence="1">NAD-dependent protein deacylase sirtuin-5, mitochondrial</fullName>
        <ecNumber evidence="1">2.3.1.-</ecNumber>
    </recommendedName>
    <alternativeName>
        <fullName evidence="1">Regulatory protein SIR2 homolog 5</fullName>
    </alternativeName>
</protein>
<dbReference type="EC" id="2.3.1.-" evidence="1"/>
<dbReference type="EMBL" id="AAMC01114011">
    <property type="status" value="NOT_ANNOTATED_CDS"/>
    <property type="molecule type" value="Genomic_DNA"/>
</dbReference>
<dbReference type="EMBL" id="AAMC01114012">
    <property type="status" value="NOT_ANNOTATED_CDS"/>
    <property type="molecule type" value="Genomic_DNA"/>
</dbReference>
<dbReference type="RefSeq" id="NP_001263631.1">
    <property type="nucleotide sequence ID" value="NM_001276702.1"/>
</dbReference>
<dbReference type="RefSeq" id="NP_001263632.1">
    <property type="nucleotide sequence ID" value="NM_001276703.1"/>
</dbReference>
<dbReference type="SMR" id="F7DKV7"/>
<dbReference type="FunCoup" id="F7DKV7">
    <property type="interactions" value="1165"/>
</dbReference>
<dbReference type="STRING" id="8364.ENSXETP00000020607"/>
<dbReference type="PaxDb" id="8364-ENSXETP00000004834"/>
<dbReference type="GeneID" id="100170199"/>
<dbReference type="KEGG" id="xtr:100170199"/>
<dbReference type="AGR" id="Xenbase:XB-GENE-5892372"/>
<dbReference type="CTD" id="23408"/>
<dbReference type="Xenbase" id="XB-GENE-5892372">
    <property type="gene designation" value="sirt5"/>
</dbReference>
<dbReference type="eggNOG" id="KOG2684">
    <property type="taxonomic scope" value="Eukaryota"/>
</dbReference>
<dbReference type="HOGENOM" id="CLU_023643_3_1_1"/>
<dbReference type="InParanoid" id="F7DKV7"/>
<dbReference type="OMA" id="LIHMHGE"/>
<dbReference type="OrthoDB" id="424302at2759"/>
<dbReference type="PhylomeDB" id="F7DKV7"/>
<dbReference type="TreeFam" id="TF106183"/>
<dbReference type="Reactome" id="R-XTR-2151201">
    <property type="pathway name" value="Transcriptional activation of mitochondrial biogenesis"/>
</dbReference>
<dbReference type="Proteomes" id="UP000008143">
    <property type="component" value="Chromosome 6"/>
</dbReference>
<dbReference type="Bgee" id="ENSXETG00000002270">
    <property type="expression patterns" value="Expressed in skeletal muscle tissue and 20 other cell types or tissues"/>
</dbReference>
<dbReference type="GO" id="GO:0005829">
    <property type="term" value="C:cytosol"/>
    <property type="evidence" value="ECO:0000250"/>
    <property type="project" value="UniProtKB"/>
</dbReference>
<dbReference type="GO" id="GO:0005739">
    <property type="term" value="C:mitochondrion"/>
    <property type="evidence" value="ECO:0000250"/>
    <property type="project" value="UniProtKB"/>
</dbReference>
<dbReference type="GO" id="GO:0005634">
    <property type="term" value="C:nucleus"/>
    <property type="evidence" value="ECO:0007669"/>
    <property type="project" value="UniProtKB-SubCell"/>
</dbReference>
<dbReference type="GO" id="GO:0070403">
    <property type="term" value="F:NAD+ binding"/>
    <property type="evidence" value="ECO:0000250"/>
    <property type="project" value="UniProtKB"/>
</dbReference>
<dbReference type="GO" id="GO:0034979">
    <property type="term" value="F:NAD-dependent protein lysine deacetylase activity"/>
    <property type="evidence" value="ECO:0007669"/>
    <property type="project" value="UniProtKB-UniRule"/>
</dbReference>
<dbReference type="GO" id="GO:0061697">
    <property type="term" value="F:protein-glutaryllysine deglutarylase activity"/>
    <property type="evidence" value="ECO:0007669"/>
    <property type="project" value="RHEA"/>
</dbReference>
<dbReference type="GO" id="GO:0036054">
    <property type="term" value="F:protein-malonyllysine demalonylase activity"/>
    <property type="evidence" value="ECO:0000250"/>
    <property type="project" value="UniProtKB"/>
</dbReference>
<dbReference type="GO" id="GO:0036055">
    <property type="term" value="F:protein-succinyllysine desuccinylase activity"/>
    <property type="evidence" value="ECO:0000250"/>
    <property type="project" value="UniProtKB"/>
</dbReference>
<dbReference type="GO" id="GO:0008270">
    <property type="term" value="F:zinc ion binding"/>
    <property type="evidence" value="ECO:0000250"/>
    <property type="project" value="UniProtKB"/>
</dbReference>
<dbReference type="GO" id="GO:0036047">
    <property type="term" value="P:peptidyl-lysine demalonylation"/>
    <property type="evidence" value="ECO:0000250"/>
    <property type="project" value="UniProtKB"/>
</dbReference>
<dbReference type="GO" id="GO:0036049">
    <property type="term" value="P:peptidyl-lysine desuccinylation"/>
    <property type="evidence" value="ECO:0000250"/>
    <property type="project" value="UniProtKB"/>
</dbReference>
<dbReference type="GO" id="GO:0036048">
    <property type="term" value="P:protein desuccinylation"/>
    <property type="evidence" value="ECO:0000250"/>
    <property type="project" value="UniProtKB"/>
</dbReference>
<dbReference type="GO" id="GO:0010566">
    <property type="term" value="P:regulation of ketone biosynthetic process"/>
    <property type="evidence" value="ECO:0000250"/>
    <property type="project" value="UniProtKB"/>
</dbReference>
<dbReference type="CDD" id="cd01412">
    <property type="entry name" value="SIRT5_Af1_CobB"/>
    <property type="match status" value="1"/>
</dbReference>
<dbReference type="FunFam" id="3.30.1600.10:FF:000005">
    <property type="entry name" value="NAD-dependent protein deacylase sirtuin-5, mitochondrial"/>
    <property type="match status" value="1"/>
</dbReference>
<dbReference type="Gene3D" id="3.30.1600.10">
    <property type="entry name" value="SIR2/SIRT2 'Small Domain"/>
    <property type="match status" value="1"/>
</dbReference>
<dbReference type="Gene3D" id="3.40.50.1220">
    <property type="entry name" value="TPP-binding domain"/>
    <property type="match status" value="1"/>
</dbReference>
<dbReference type="HAMAP" id="MF_01121">
    <property type="entry name" value="Sirtuin_ClassIII"/>
    <property type="match status" value="1"/>
</dbReference>
<dbReference type="InterPro" id="IPR029035">
    <property type="entry name" value="DHS-like_NAD/FAD-binding_dom"/>
</dbReference>
<dbReference type="InterPro" id="IPR050134">
    <property type="entry name" value="NAD-dep_sirtuin_deacylases"/>
</dbReference>
<dbReference type="InterPro" id="IPR003000">
    <property type="entry name" value="Sirtuin"/>
</dbReference>
<dbReference type="InterPro" id="IPR026591">
    <property type="entry name" value="Sirtuin_cat_small_dom_sf"/>
</dbReference>
<dbReference type="InterPro" id="IPR027546">
    <property type="entry name" value="Sirtuin_class_III"/>
</dbReference>
<dbReference type="InterPro" id="IPR026590">
    <property type="entry name" value="Ssirtuin_cat_dom"/>
</dbReference>
<dbReference type="NCBIfam" id="NF001753">
    <property type="entry name" value="PRK00481.1-3"/>
    <property type="match status" value="1"/>
</dbReference>
<dbReference type="PANTHER" id="PTHR11085">
    <property type="entry name" value="NAD-DEPENDENT PROTEIN DEACYLASE SIRTUIN-5, MITOCHONDRIAL-RELATED"/>
    <property type="match status" value="1"/>
</dbReference>
<dbReference type="PANTHER" id="PTHR11085:SF10">
    <property type="entry name" value="NAD-DEPENDENT PROTEIN DEACYLASE SIRTUIN-5, MITOCHONDRIAL-RELATED"/>
    <property type="match status" value="1"/>
</dbReference>
<dbReference type="Pfam" id="PF02146">
    <property type="entry name" value="SIR2"/>
    <property type="match status" value="1"/>
</dbReference>
<dbReference type="SUPFAM" id="SSF52467">
    <property type="entry name" value="DHS-like NAD/FAD-binding domain"/>
    <property type="match status" value="1"/>
</dbReference>
<dbReference type="PROSITE" id="PS50305">
    <property type="entry name" value="SIRTUIN"/>
    <property type="match status" value="1"/>
</dbReference>
<gene>
    <name type="primary">sirt5</name>
</gene>
<name>SIR5_XENTR</name>
<comment type="function">
    <text evidence="1">NAD-dependent lysine demalonylase, desuccinylase and deglutarylase that specifically removes malonyl, succinyl and glutaryl groups on target proteins. Has weak NAD-dependent protein deacetylase activity; however this activity may not be physiologically relevant in vivo.</text>
</comment>
<comment type="catalytic activity">
    <reaction evidence="1">
        <text>N(6)-malonyl-L-lysyl-[protein] + NAD(+) + H2O = 2''-O-malonyl-ADP-D-ribose + nicotinamide + L-lysyl-[protein]</text>
        <dbReference type="Rhea" id="RHEA:47672"/>
        <dbReference type="Rhea" id="RHEA-COMP:9752"/>
        <dbReference type="Rhea" id="RHEA-COMP:11878"/>
        <dbReference type="ChEBI" id="CHEBI:15377"/>
        <dbReference type="ChEBI" id="CHEBI:17154"/>
        <dbReference type="ChEBI" id="CHEBI:29969"/>
        <dbReference type="ChEBI" id="CHEBI:57540"/>
        <dbReference type="ChEBI" id="CHEBI:87831"/>
        <dbReference type="ChEBI" id="CHEBI:87833"/>
    </reaction>
</comment>
<comment type="catalytic activity">
    <reaction evidence="1">
        <text>N(6)-succinyl-L-lysyl-[protein] + NAD(+) + H2O = 2''-O-succinyl-ADP-D-ribose + nicotinamide + L-lysyl-[protein]</text>
        <dbReference type="Rhea" id="RHEA:47668"/>
        <dbReference type="Rhea" id="RHEA-COMP:9752"/>
        <dbReference type="Rhea" id="RHEA-COMP:11877"/>
        <dbReference type="ChEBI" id="CHEBI:15377"/>
        <dbReference type="ChEBI" id="CHEBI:17154"/>
        <dbReference type="ChEBI" id="CHEBI:29969"/>
        <dbReference type="ChEBI" id="CHEBI:57540"/>
        <dbReference type="ChEBI" id="CHEBI:87830"/>
        <dbReference type="ChEBI" id="CHEBI:87832"/>
    </reaction>
</comment>
<comment type="catalytic activity">
    <reaction evidence="1">
        <text>N(6)-glutaryl-L-lysyl-[protein] + NAD(+) + H2O = 2''-O-glutaryl-ADP-D-ribose + nicotinamide + L-lysyl-[protein]</text>
        <dbReference type="Rhea" id="RHEA:47664"/>
        <dbReference type="Rhea" id="RHEA-COMP:9752"/>
        <dbReference type="Rhea" id="RHEA-COMP:11875"/>
        <dbReference type="ChEBI" id="CHEBI:15377"/>
        <dbReference type="ChEBI" id="CHEBI:17154"/>
        <dbReference type="ChEBI" id="CHEBI:29969"/>
        <dbReference type="ChEBI" id="CHEBI:57540"/>
        <dbReference type="ChEBI" id="CHEBI:87828"/>
        <dbReference type="ChEBI" id="CHEBI:87829"/>
    </reaction>
</comment>
<comment type="cofactor">
    <cofactor evidence="1">
        <name>Zn(2+)</name>
        <dbReference type="ChEBI" id="CHEBI:29105"/>
    </cofactor>
    <text evidence="1">Binds 1 zinc ion per subunit.</text>
</comment>
<comment type="subcellular location">
    <subcellularLocation>
        <location evidence="1">Mitochondrion</location>
    </subcellularLocation>
    <subcellularLocation>
        <location evidence="1">Cytoplasm</location>
        <location evidence="1">Cytosol</location>
    </subcellularLocation>
    <subcellularLocation>
        <location evidence="1">Nucleus</location>
    </subcellularLocation>
    <text evidence="1">Mainly mitochondrial. Also present extramitochondrially, with a fraction present in the cytosol and very small amounts also detected in the nucleus.</text>
</comment>
<comment type="domain">
    <text evidence="1">In contrast to class I sirtuins, class III sirtuins have only weak deacetylase activity. Difference in substrate specificity is probably due to a larger hydrophobic pocket with 2 residues (Tyr-101 and Arg-104) that bind to malonylated and succinylated substrates and define the specificity.</text>
</comment>
<comment type="similarity">
    <text evidence="1">Belongs to the sirtuin family. Class III subfamily.</text>
</comment>
<evidence type="ECO:0000255" key="1">
    <source>
        <dbReference type="HAMAP-Rule" id="MF_03160"/>
    </source>
</evidence>
<evidence type="ECO:0000255" key="2">
    <source>
        <dbReference type="PROSITE-ProRule" id="PRU00236"/>
    </source>
</evidence>
<proteinExistence type="inferred from homology"/>
<organism>
    <name type="scientific">Xenopus tropicalis</name>
    <name type="common">Western clawed frog</name>
    <name type="synonym">Silurana tropicalis</name>
    <dbReference type="NCBI Taxonomy" id="8364"/>
    <lineage>
        <taxon>Eukaryota</taxon>
        <taxon>Metazoa</taxon>
        <taxon>Chordata</taxon>
        <taxon>Craniata</taxon>
        <taxon>Vertebrata</taxon>
        <taxon>Euteleostomi</taxon>
        <taxon>Amphibia</taxon>
        <taxon>Batrachia</taxon>
        <taxon>Anura</taxon>
        <taxon>Pipoidea</taxon>
        <taxon>Pipidae</taxon>
        <taxon>Xenopodinae</taxon>
        <taxon>Xenopus</taxon>
        <taxon>Silurana</taxon>
    </lineage>
</organism>
<sequence>MILLPFHTRRLVSHVYCGLKPASKKKGIALEMARPSSNLADFREAFAKAKHIAVITGAGVSAESGVPTFRGAGGYWRKWQAQHLATPEAFARNPSRVWEFYHYRREVMLTKNPNPAHLAIAECETRLRKQGRKLVVITQNIDELHRKAGSRNLFEIHGSLFKTRCTSCGSVKENYKSPICPALAGKGAPEPDVQDAKIPVEQLPRCDENGCNGLLRPNVVWFGETLDSNLLGEVEKELEICDLCVVVGTSSVVYPAAMFAPQVAARGVPVAEFNMENTPATTSFTFHFQGPCGTTLPPAIARHETELIS</sequence>
<accession>F7DKV7</accession>